<dbReference type="EMBL" id="AE017126">
    <property type="protein sequence ID" value="AAQ00861.1"/>
    <property type="molecule type" value="Genomic_DNA"/>
</dbReference>
<dbReference type="RefSeq" id="NP_876208.1">
    <property type="nucleotide sequence ID" value="NC_005042.1"/>
</dbReference>
<dbReference type="RefSeq" id="WP_011125966.1">
    <property type="nucleotide sequence ID" value="NC_005042.1"/>
</dbReference>
<dbReference type="SMR" id="Q7V9L5"/>
<dbReference type="STRING" id="167539.Pro_1817"/>
<dbReference type="EnsemblBacteria" id="AAQ00861">
    <property type="protein sequence ID" value="AAQ00861"/>
    <property type="gene ID" value="Pro_1817"/>
</dbReference>
<dbReference type="KEGG" id="pma:Pro_1817"/>
<dbReference type="PATRIC" id="fig|167539.5.peg.1919"/>
<dbReference type="eggNOG" id="COG1219">
    <property type="taxonomic scope" value="Bacteria"/>
</dbReference>
<dbReference type="HOGENOM" id="CLU_014218_8_2_3"/>
<dbReference type="OrthoDB" id="9804062at2"/>
<dbReference type="Proteomes" id="UP000001420">
    <property type="component" value="Chromosome"/>
</dbReference>
<dbReference type="GO" id="GO:0009376">
    <property type="term" value="C:HslUV protease complex"/>
    <property type="evidence" value="ECO:0007669"/>
    <property type="project" value="TreeGrafter"/>
</dbReference>
<dbReference type="GO" id="GO:0005524">
    <property type="term" value="F:ATP binding"/>
    <property type="evidence" value="ECO:0007669"/>
    <property type="project" value="UniProtKB-UniRule"/>
</dbReference>
<dbReference type="GO" id="GO:0016887">
    <property type="term" value="F:ATP hydrolysis activity"/>
    <property type="evidence" value="ECO:0007669"/>
    <property type="project" value="InterPro"/>
</dbReference>
<dbReference type="GO" id="GO:0140662">
    <property type="term" value="F:ATP-dependent protein folding chaperone"/>
    <property type="evidence" value="ECO:0007669"/>
    <property type="project" value="InterPro"/>
</dbReference>
<dbReference type="GO" id="GO:0046983">
    <property type="term" value="F:protein dimerization activity"/>
    <property type="evidence" value="ECO:0007669"/>
    <property type="project" value="InterPro"/>
</dbReference>
<dbReference type="GO" id="GO:0051082">
    <property type="term" value="F:unfolded protein binding"/>
    <property type="evidence" value="ECO:0007669"/>
    <property type="project" value="UniProtKB-UniRule"/>
</dbReference>
<dbReference type="GO" id="GO:0008270">
    <property type="term" value="F:zinc ion binding"/>
    <property type="evidence" value="ECO:0007669"/>
    <property type="project" value="InterPro"/>
</dbReference>
<dbReference type="GO" id="GO:0051301">
    <property type="term" value="P:cell division"/>
    <property type="evidence" value="ECO:0007669"/>
    <property type="project" value="TreeGrafter"/>
</dbReference>
<dbReference type="GO" id="GO:0051603">
    <property type="term" value="P:proteolysis involved in protein catabolic process"/>
    <property type="evidence" value="ECO:0007669"/>
    <property type="project" value="TreeGrafter"/>
</dbReference>
<dbReference type="CDD" id="cd19497">
    <property type="entry name" value="RecA-like_ClpX"/>
    <property type="match status" value="1"/>
</dbReference>
<dbReference type="FunFam" id="1.10.8.60:FF:000002">
    <property type="entry name" value="ATP-dependent Clp protease ATP-binding subunit ClpX"/>
    <property type="match status" value="1"/>
</dbReference>
<dbReference type="FunFam" id="3.40.50.300:FF:000005">
    <property type="entry name" value="ATP-dependent Clp protease ATP-binding subunit ClpX"/>
    <property type="match status" value="1"/>
</dbReference>
<dbReference type="Gene3D" id="1.10.8.60">
    <property type="match status" value="1"/>
</dbReference>
<dbReference type="Gene3D" id="6.20.220.10">
    <property type="entry name" value="ClpX chaperone, C4-type zinc finger domain"/>
    <property type="match status" value="1"/>
</dbReference>
<dbReference type="Gene3D" id="3.40.50.300">
    <property type="entry name" value="P-loop containing nucleotide triphosphate hydrolases"/>
    <property type="match status" value="1"/>
</dbReference>
<dbReference type="HAMAP" id="MF_00175">
    <property type="entry name" value="ClpX"/>
    <property type="match status" value="1"/>
</dbReference>
<dbReference type="InterPro" id="IPR003593">
    <property type="entry name" value="AAA+_ATPase"/>
</dbReference>
<dbReference type="InterPro" id="IPR050052">
    <property type="entry name" value="ATP-dep_Clp_protease_ClpX"/>
</dbReference>
<dbReference type="InterPro" id="IPR003959">
    <property type="entry name" value="ATPase_AAA_core"/>
</dbReference>
<dbReference type="InterPro" id="IPR019489">
    <property type="entry name" value="Clp_ATPase_C"/>
</dbReference>
<dbReference type="InterPro" id="IPR004487">
    <property type="entry name" value="Clp_protease_ATP-bd_su_ClpX"/>
</dbReference>
<dbReference type="InterPro" id="IPR046425">
    <property type="entry name" value="ClpX_bact"/>
</dbReference>
<dbReference type="InterPro" id="IPR027417">
    <property type="entry name" value="P-loop_NTPase"/>
</dbReference>
<dbReference type="InterPro" id="IPR010603">
    <property type="entry name" value="Znf_CppX_C4"/>
</dbReference>
<dbReference type="InterPro" id="IPR038366">
    <property type="entry name" value="Znf_CppX_C4_sf"/>
</dbReference>
<dbReference type="NCBIfam" id="TIGR00382">
    <property type="entry name" value="clpX"/>
    <property type="match status" value="1"/>
</dbReference>
<dbReference type="NCBIfam" id="NF003745">
    <property type="entry name" value="PRK05342.1"/>
    <property type="match status" value="1"/>
</dbReference>
<dbReference type="PANTHER" id="PTHR48102:SF7">
    <property type="entry name" value="ATP-DEPENDENT CLP PROTEASE ATP-BINDING SUBUNIT CLPX-LIKE, MITOCHONDRIAL"/>
    <property type="match status" value="1"/>
</dbReference>
<dbReference type="PANTHER" id="PTHR48102">
    <property type="entry name" value="ATP-DEPENDENT CLP PROTEASE ATP-BINDING SUBUNIT CLPX-LIKE, MITOCHONDRIAL-RELATED"/>
    <property type="match status" value="1"/>
</dbReference>
<dbReference type="Pfam" id="PF07724">
    <property type="entry name" value="AAA_2"/>
    <property type="match status" value="1"/>
</dbReference>
<dbReference type="Pfam" id="PF10431">
    <property type="entry name" value="ClpB_D2-small"/>
    <property type="match status" value="1"/>
</dbReference>
<dbReference type="Pfam" id="PF06689">
    <property type="entry name" value="zf-C4_ClpX"/>
    <property type="match status" value="1"/>
</dbReference>
<dbReference type="SMART" id="SM00382">
    <property type="entry name" value="AAA"/>
    <property type="match status" value="1"/>
</dbReference>
<dbReference type="SMART" id="SM01086">
    <property type="entry name" value="ClpB_D2-small"/>
    <property type="match status" value="1"/>
</dbReference>
<dbReference type="SMART" id="SM00994">
    <property type="entry name" value="zf-C4_ClpX"/>
    <property type="match status" value="1"/>
</dbReference>
<dbReference type="SUPFAM" id="SSF57716">
    <property type="entry name" value="Glucocorticoid receptor-like (DNA-binding domain)"/>
    <property type="match status" value="1"/>
</dbReference>
<dbReference type="SUPFAM" id="SSF52540">
    <property type="entry name" value="P-loop containing nucleoside triphosphate hydrolases"/>
    <property type="match status" value="1"/>
</dbReference>
<dbReference type="PROSITE" id="PS51902">
    <property type="entry name" value="CLPX_ZB"/>
    <property type="match status" value="1"/>
</dbReference>
<sequence>MAKFEAHLKCSFCGKSQEQVRKLIAGPGVYICDECIDLCNEILDEELLENPSKVKDGNDSKIPTSASTVSKPAPTLSSIPKPIEIKSFLDNQVVGQEDAKKILSVAVYNHYKRLAWQGSETNEIDLHTTKLHKSNILLIGPTGSGKTLLAQTLAELLDVPFAVADATTLTEAGYVGEDVENILLRLLQKSDMDVELAQRGIIYIDEIDKIARKSENPSITRDVSGEGVQQALLKMLEGTIANVPPQGGRKHPYQDSIQIDTSQILFICGGAFVGLEDIVQKRLGRNSIGFMTNDNRGKSRKSNDLPKNQVLNNLEPDDLVRYGLIPEFIGRMPVSAVLEPLDVDALEAILQEPRDAVIKQFITLMSMDNVKLTFEENAIKSIAKEAFRRKTGARALRGIVEELMLELMYKLPSQDEIKNCSVTQAMVEAITGGKIVPLPPSDKRATKESA</sequence>
<proteinExistence type="inferred from homology"/>
<organism>
    <name type="scientific">Prochlorococcus marinus (strain SARG / CCMP1375 / SS120)</name>
    <dbReference type="NCBI Taxonomy" id="167539"/>
    <lineage>
        <taxon>Bacteria</taxon>
        <taxon>Bacillati</taxon>
        <taxon>Cyanobacteriota</taxon>
        <taxon>Cyanophyceae</taxon>
        <taxon>Synechococcales</taxon>
        <taxon>Prochlorococcaceae</taxon>
        <taxon>Prochlorococcus</taxon>
    </lineage>
</organism>
<accession>Q7V9L5</accession>
<feature type="chain" id="PRO_0000160401" description="ATP-dependent Clp protease ATP-binding subunit ClpX">
    <location>
        <begin position="1"/>
        <end position="450"/>
    </location>
</feature>
<feature type="domain" description="ClpX-type ZB" evidence="2">
    <location>
        <begin position="1"/>
        <end position="51"/>
    </location>
</feature>
<feature type="region of interest" description="Disordered" evidence="3">
    <location>
        <begin position="53"/>
        <end position="75"/>
    </location>
</feature>
<feature type="compositionally biased region" description="Polar residues" evidence="3">
    <location>
        <begin position="61"/>
        <end position="75"/>
    </location>
</feature>
<feature type="binding site" evidence="2">
    <location>
        <position position="10"/>
    </location>
    <ligand>
        <name>Zn(2+)</name>
        <dbReference type="ChEBI" id="CHEBI:29105"/>
    </ligand>
</feature>
<feature type="binding site" evidence="2">
    <location>
        <position position="13"/>
    </location>
    <ligand>
        <name>Zn(2+)</name>
        <dbReference type="ChEBI" id="CHEBI:29105"/>
    </ligand>
</feature>
<feature type="binding site" evidence="2">
    <location>
        <position position="32"/>
    </location>
    <ligand>
        <name>Zn(2+)</name>
        <dbReference type="ChEBI" id="CHEBI:29105"/>
    </ligand>
</feature>
<feature type="binding site" evidence="2">
    <location>
        <position position="35"/>
    </location>
    <ligand>
        <name>Zn(2+)</name>
        <dbReference type="ChEBI" id="CHEBI:29105"/>
    </ligand>
</feature>
<feature type="binding site" evidence="1">
    <location>
        <begin position="141"/>
        <end position="148"/>
    </location>
    <ligand>
        <name>ATP</name>
        <dbReference type="ChEBI" id="CHEBI:30616"/>
    </ligand>
</feature>
<gene>
    <name evidence="1" type="primary">clpX</name>
    <name type="ordered locus">Pro_1817</name>
</gene>
<protein>
    <recommendedName>
        <fullName evidence="1">ATP-dependent Clp protease ATP-binding subunit ClpX</fullName>
    </recommendedName>
</protein>
<evidence type="ECO:0000255" key="1">
    <source>
        <dbReference type="HAMAP-Rule" id="MF_00175"/>
    </source>
</evidence>
<evidence type="ECO:0000255" key="2">
    <source>
        <dbReference type="PROSITE-ProRule" id="PRU01250"/>
    </source>
</evidence>
<evidence type="ECO:0000256" key="3">
    <source>
        <dbReference type="SAM" id="MobiDB-lite"/>
    </source>
</evidence>
<name>CLPX_PROMA</name>
<reference key="1">
    <citation type="journal article" date="2003" name="Proc. Natl. Acad. Sci. U.S.A.">
        <title>Genome sequence of the cyanobacterium Prochlorococcus marinus SS120, a nearly minimal oxyphototrophic genome.</title>
        <authorList>
            <person name="Dufresne A."/>
            <person name="Salanoubat M."/>
            <person name="Partensky F."/>
            <person name="Artiguenave F."/>
            <person name="Axmann I.M."/>
            <person name="Barbe V."/>
            <person name="Duprat S."/>
            <person name="Galperin M.Y."/>
            <person name="Koonin E.V."/>
            <person name="Le Gall F."/>
            <person name="Makarova K.S."/>
            <person name="Ostrowski M."/>
            <person name="Oztas S."/>
            <person name="Robert C."/>
            <person name="Rogozin I.B."/>
            <person name="Scanlan D.J."/>
            <person name="Tandeau de Marsac N."/>
            <person name="Weissenbach J."/>
            <person name="Wincker P."/>
            <person name="Wolf Y.I."/>
            <person name="Hess W.R."/>
        </authorList>
    </citation>
    <scope>NUCLEOTIDE SEQUENCE [LARGE SCALE GENOMIC DNA]</scope>
    <source>
        <strain>SARG / CCMP1375 / SS120</strain>
    </source>
</reference>
<comment type="function">
    <text evidence="1">ATP-dependent specificity component of the Clp protease. It directs the protease to specific substrates. Can perform chaperone functions in the absence of ClpP.</text>
</comment>
<comment type="subunit">
    <text evidence="1">Component of the ClpX-ClpP complex. Forms a hexameric ring that, in the presence of ATP, binds to fourteen ClpP subunits assembled into a disk-like structure with a central cavity, resembling the structure of eukaryotic proteasomes.</text>
</comment>
<comment type="similarity">
    <text evidence="1">Belongs to the ClpX chaperone family.</text>
</comment>
<keyword id="KW-0067">ATP-binding</keyword>
<keyword id="KW-0143">Chaperone</keyword>
<keyword id="KW-0479">Metal-binding</keyword>
<keyword id="KW-0547">Nucleotide-binding</keyword>
<keyword id="KW-1185">Reference proteome</keyword>
<keyword id="KW-0862">Zinc</keyword>